<keyword id="KW-0156">Chromatin regulator</keyword>
<keyword id="KW-0539">Nucleus</keyword>
<keyword id="KW-1185">Reference proteome</keyword>
<keyword id="KW-0677">Repeat</keyword>
<keyword id="KW-0678">Repressor</keyword>
<keyword id="KW-0804">Transcription</keyword>
<keyword id="KW-0805">Transcription regulation</keyword>
<keyword id="KW-0853">WD repeat</keyword>
<organism>
    <name type="scientific">Gallus gallus</name>
    <name type="common">Chicken</name>
    <dbReference type="NCBI Taxonomy" id="9031"/>
    <lineage>
        <taxon>Eukaryota</taxon>
        <taxon>Metazoa</taxon>
        <taxon>Chordata</taxon>
        <taxon>Craniata</taxon>
        <taxon>Vertebrata</taxon>
        <taxon>Euteleostomi</taxon>
        <taxon>Archelosauria</taxon>
        <taxon>Archosauria</taxon>
        <taxon>Dinosauria</taxon>
        <taxon>Saurischia</taxon>
        <taxon>Theropoda</taxon>
        <taxon>Coelurosauria</taxon>
        <taxon>Aves</taxon>
        <taxon>Neognathae</taxon>
        <taxon>Galloanserae</taxon>
        <taxon>Galliformes</taxon>
        <taxon>Phasianidae</taxon>
        <taxon>Phasianinae</taxon>
        <taxon>Gallus</taxon>
    </lineage>
</organism>
<comment type="function">
    <text evidence="1 6">Cooperates with ASF1A to promote replication-independent chromatin assembly (By similarity). May regulate the transcription of a variety of genes controlling cell growth.</text>
</comment>
<comment type="subunit">
    <text evidence="4 5 7">Interacts with ASF1, HDAC1, HDAC2 and RBBP4.</text>
</comment>
<comment type="interaction">
    <interactant intactId="EBI-996848">
        <id>P79987</id>
    </interactant>
    <interactant intactId="EBI-996834">
        <id>Q3C1E9</id>
        <label>ASF1</label>
    </interactant>
    <organismsDiffer>false</organismsDiffer>
    <experiments>2</experiments>
</comment>
<comment type="subcellular location">
    <subcellularLocation>
        <location evidence="1">Nucleus</location>
    </subcellularLocation>
</comment>
<comment type="developmental stage">
    <text evidence="8">Expressed from gastrulation onwards with predominant expression in the neuroepithelium during neurulation. Expressed in regions of the embryo containing migrating neural crest cells, particularly those emanating from rhombomeres 4 and 6. Expressed throughout the rostral mesenchyme with higher levels of expression in regions containing neural crest cells. At later stages strong expression is seen in the neural crest derived regions of the head, the branchial arches and the pharyngeal pouches. Expression at the rhombomere boundaries increases around stage 16.</text>
</comment>
<comment type="similarity">
    <text evidence="9">Belongs to the WD repeat HIR1 family.</text>
</comment>
<sequence>MKLLKPTWVNHNGKPIFSVDIHPDGTKFATGGQGQDSGKVVIWNMAPVLKEEDEKNENIPKMLCQMDNHLACVNCVRWSNNGVYLASGGDDKLIMVWKRAAYIGPSTVFGSSSKLTNVEQWRCVSILRSHSGDVMDVAWSPHDAWLASCSVDNTVVIWNAVKFPEILATLKGHSGLVKGLTWDPVGKYIASQADDRSLKVWRTMDWQLETSITKPFDECGGTTHVLRLSWSPDGHYLVSAHAMNNSGPTAQIIERDGWKTNMDFVGHRKAVTVVKFNPKIFKKKQKNGSSTKSSCPYCCCAVGSKDRSLSVWLTCLKRPLVVIHELFDKSIMDISWTLNGLGILVCSMDGSVAFLDFSQDELGDPLSEEEKSNIHQSTYGKSLAIMTEAQLSTTIIENPEMLKYQQRQQQQQAEQKNASIREASGAATTAPKVASMVNGESLEDIRKNLLKKQVETRTADGRRRITPLCIAQLDTGDFSTAFFNSIPISGTLAGSIMSSQNNQQLMSLDSNAANSLNTSKPSAEPTAASIKPTDDAASKDGVNATSVSTAPPASSSSVLTTPSKIEPMKAFDSRFTERSKATSGTAVVTNTNQTVVDRLKDQNLIKDNKPKDILESSSDSEEKIPAAKPLSAPKRKLELEGETVEKKKKGRPRKDSRLVPVTLTVQSPAALASEKDAACISAPALALKLPTPIPQKSFTLQVSSDPSMYLEVENEMTTVGGSKLSRLKCNREGKEWETVLTSRILTAAGSCEIVCVACEKRMLSVFSACGRRLLPPIILNTPISTLHCTGSYIMTLTTAATLSVWDVHKQTVIVRDESLQTILSGSDTTVSQILLTQHGIPVMSMSDGKAYCFNPSLSTWNLVSDKQDSLAQCADFRSSLPSQEAMLCSGPLAVIQGRTSNSGRQAARLFSMPHLVQQETTLAYLENQIAAALMLQSSHEYRHWLLIYARYLVNEGFEYRLRELCKDLLGPVHYSRGSQWESTVMGLRKRELLKELLPVIGQNLFQRLFTEYQEQLDIL</sequence>
<name>HIRA_CHICK</name>
<feature type="chain" id="PRO_0000051018" description="Protein HIRA">
    <location>
        <begin position="1"/>
        <end position="1019"/>
    </location>
</feature>
<feature type="repeat" description="WD 1" evidence="2 5">
    <location>
        <begin position="11"/>
        <end position="53"/>
    </location>
</feature>
<feature type="repeat" description="WD 2" evidence="2 5">
    <location>
        <begin position="68"/>
        <end position="107"/>
    </location>
</feature>
<feature type="repeat" description="WD 3" evidence="2 5">
    <location>
        <begin position="129"/>
        <end position="168"/>
    </location>
</feature>
<feature type="repeat" description="WD 4" evidence="2 5">
    <location>
        <begin position="172"/>
        <end position="211"/>
    </location>
</feature>
<feature type="repeat" description="WD 5" evidence="2 5">
    <location>
        <begin position="220"/>
        <end position="263"/>
    </location>
</feature>
<feature type="repeat" description="WD 6" evidence="2 5">
    <location>
        <begin position="266"/>
        <end position="322"/>
    </location>
</feature>
<feature type="repeat" description="WD 7" evidence="2 5">
    <location>
        <begin position="326"/>
        <end position="367"/>
    </location>
</feature>
<feature type="region of interest" description="Interaction with RBBP4">
    <location>
        <begin position="23"/>
        <end position="443"/>
    </location>
</feature>
<feature type="region of interest" description="Disordered" evidence="3">
    <location>
        <begin position="406"/>
        <end position="433"/>
    </location>
</feature>
<feature type="region of interest" description="Interaction with HDAC1">
    <location>
        <begin position="444"/>
        <end position="1019"/>
    </location>
</feature>
<feature type="region of interest" description="Disordered" evidence="3">
    <location>
        <begin position="513"/>
        <end position="561"/>
    </location>
</feature>
<feature type="region of interest" description="Disordered" evidence="3">
    <location>
        <begin position="599"/>
        <end position="633"/>
    </location>
</feature>
<feature type="region of interest" description="Interaction with HDAC2">
    <location>
        <begin position="960"/>
        <end position="1019"/>
    </location>
</feature>
<feature type="compositionally biased region" description="Low complexity" evidence="3">
    <location>
        <begin position="406"/>
        <end position="415"/>
    </location>
</feature>
<feature type="compositionally biased region" description="Low complexity" evidence="3">
    <location>
        <begin position="544"/>
        <end position="561"/>
    </location>
</feature>
<feature type="compositionally biased region" description="Basic and acidic residues" evidence="3">
    <location>
        <begin position="599"/>
        <end position="625"/>
    </location>
</feature>
<feature type="mutagenesis site" description="Abrogates interaction with RBBP4." evidence="5">
    <original>WN</original>
    <variation>AA</variation>
    <location>
        <begin position="43"/>
        <end position="44"/>
    </location>
</feature>
<feature type="mutagenesis site" description="Abrogates interaction with RBBP4." evidence="5">
    <original>WR</original>
    <variation>AA</variation>
    <location>
        <begin position="121"/>
        <end position="122"/>
    </location>
</feature>
<feature type="mutagenesis site" description="Abrogates interaction with RBBP4." evidence="5">
    <original>WD</original>
    <variation>AA</variation>
    <location>
        <begin position="182"/>
        <end position="183"/>
    </location>
</feature>
<feature type="mutagenesis site" description="Abrogates interaction with RBBP4 and impairs transcriptional repression." evidence="5">
    <original>WT</original>
    <variation>AA</variation>
    <location>
        <begin position="336"/>
        <end position="337"/>
    </location>
</feature>
<feature type="mutagenesis site" description="Abrogates interaction with HDAC2 and impairs transcriptional repression." evidence="4 5">
    <original>L</original>
    <variation>A</variation>
    <location>
        <position position="993"/>
    </location>
</feature>
<feature type="mutagenesis site" description="Abrogates interaction with HDAC2." evidence="4 5">
    <original>L</original>
    <variation>A</variation>
    <location>
        <position position="996"/>
    </location>
</feature>
<feature type="mutagenesis site" description="Abrogates interaction with HDAC2." evidence="4 5">
    <original>L</original>
    <variation>A</variation>
    <location>
        <position position="997"/>
    </location>
</feature>
<feature type="sequence conflict" description="In Ref. 1; CAA67754." evidence="9" ref="1">
    <location>
        <position position="124"/>
    </location>
</feature>
<feature type="sequence conflict" description="In Ref. 1; CAA67754." evidence="9" ref="1">
    <original>N</original>
    <variation>NA</variation>
    <location>
        <position position="159"/>
    </location>
</feature>
<feature type="sequence conflict" description="In Ref. 1; CAA67754." evidence="9" ref="1">
    <original>W</original>
    <variation>G</variation>
    <location>
        <position position="206"/>
    </location>
</feature>
<feature type="sequence conflict" description="In Ref. 1; CAA67754." evidence="9" ref="1">
    <original>W</original>
    <variation>G</variation>
    <location>
        <position position="230"/>
    </location>
</feature>
<feature type="sequence conflict" description="In Ref. 1; CAA67754." evidence="9" ref="1">
    <original>C</original>
    <variation>S</variation>
    <location>
        <position position="315"/>
    </location>
</feature>
<feature type="sequence conflict" description="In Ref. 1; CAA67754." evidence="9" ref="1">
    <original>K</original>
    <variation>E</variation>
    <location>
        <position position="329"/>
    </location>
</feature>
<feature type="sequence conflict" description="In Ref. 1; CAA67754." evidence="9" ref="1">
    <original>DF</original>
    <variation>NS</variation>
    <location>
        <begin position="356"/>
        <end position="357"/>
    </location>
</feature>
<feature type="sequence conflict" description="In Ref. 1; CAA67754." evidence="9" ref="1">
    <original>S</original>
    <variation>T</variation>
    <location>
        <position position="367"/>
    </location>
</feature>
<feature type="sequence conflict" description="In Ref. 1; CAA67754." evidence="9" ref="1">
    <original>KSNIHQ</original>
    <variation>NSPFYH</variation>
    <location>
        <begin position="371"/>
        <end position="376"/>
    </location>
</feature>
<feature type="sequence conflict" description="In Ref. 1; CAA67754." evidence="9" ref="1">
    <original>A</original>
    <variation>P</variation>
    <location>
        <position position="384"/>
    </location>
</feature>
<feature type="sequence conflict" description="In Ref. 1; CAA67754." evidence="9" ref="1">
    <original>E</original>
    <variation>D</variation>
    <location>
        <position position="388"/>
    </location>
</feature>
<feature type="sequence conflict" description="In Ref. 1; CAA67754." evidence="9" ref="1">
    <original>TI</original>
    <variation>IT</variation>
    <location>
        <begin position="394"/>
        <end position="395"/>
    </location>
</feature>
<feature type="sequence conflict" description="In Ref. 1; CAA67754." evidence="9" ref="1">
    <original>LKYQ</original>
    <variation>SQAIE</variation>
    <location>
        <begin position="402"/>
        <end position="405"/>
    </location>
</feature>
<feature type="sequence conflict" description="In Ref. 1; CAA67754." evidence="9" ref="1">
    <original>ASGAATTAPKVASM</original>
    <variation>MGTTTSVAGI</variation>
    <location>
        <begin position="423"/>
        <end position="436"/>
    </location>
</feature>
<feature type="sequence conflict" description="In Ref. 1; CAA67754." evidence="9" ref="1">
    <original>R</original>
    <variation>L</variation>
    <location>
        <position position="446"/>
    </location>
</feature>
<feature type="sequence conflict" description="In Ref. 1; CAA67754." evidence="9" ref="1">
    <original>L</original>
    <variation>F</variation>
    <location>
        <position position="450"/>
    </location>
</feature>
<feature type="sequence conflict" description="In Ref. 1; CAA67754." evidence="9" ref="1">
    <original>I</original>
    <variation>L</variation>
    <location>
        <position position="488"/>
    </location>
</feature>
<feature type="sequence conflict" description="In Ref. 1; CAA67754." evidence="9" ref="1">
    <original>QN</original>
    <variation>HS</variation>
    <location>
        <begin position="500"/>
        <end position="501"/>
    </location>
</feature>
<feature type="sequence conflict" description="In Ref. 1; CAA67754." evidence="9" ref="1">
    <original>L</original>
    <variation>F</variation>
    <location>
        <position position="516"/>
    </location>
</feature>
<feature type="sequence conflict" description="In Ref. 1; CAA67754." evidence="9" ref="1">
    <original>T</original>
    <variation>VA</variation>
    <location>
        <position position="526"/>
    </location>
</feature>
<feature type="sequence conflict" description="In Ref. 1; CAA67754." evidence="9" ref="1">
    <original>I</original>
    <variation>V</variation>
    <location>
        <position position="530"/>
    </location>
</feature>
<feature type="sequence conflict" description="In Ref. 1; CAA67754." evidence="9" ref="1">
    <original>S</original>
    <variation>N</variation>
    <location>
        <position position="538"/>
    </location>
</feature>
<feature type="sequence conflict" description="In Ref. 1; CAA67754." evidence="9" ref="1">
    <original>G</original>
    <variation>S</variation>
    <location>
        <position position="541"/>
    </location>
</feature>
<feature type="sequence conflict" description="In Ref. 1; CAA67754." evidence="9" ref="1">
    <original>T</original>
    <variation>S</variation>
    <location>
        <position position="585"/>
    </location>
</feature>
<feature type="sequence conflict" description="In Ref. 1; CAA67754." evidence="9" ref="1">
    <original>L</original>
    <variation>F</variation>
    <location>
        <position position="604"/>
    </location>
</feature>
<feature type="sequence conflict" description="In Ref. 1; CAA67754." evidence="9" ref="1">
    <original>D</original>
    <variation>E</variation>
    <location>
        <position position="607"/>
    </location>
</feature>
<feature type="sequence conflict" description="In Ref. 1; CAA67754." evidence="9" ref="1">
    <original>A</original>
    <variation>V</variation>
    <location>
        <position position="626"/>
    </location>
</feature>
<feature type="sequence conflict" description="In Ref. 1; CAA67754." evidence="9" ref="1">
    <original>A</original>
    <variation>V</variation>
    <location>
        <position position="672"/>
    </location>
</feature>
<feature type="sequence conflict" description="In Ref. 1; CAA67754." evidence="9" ref="1">
    <original>CI</original>
    <variation>WL</variation>
    <location>
        <begin position="679"/>
        <end position="680"/>
    </location>
</feature>
<feature type="sequence conflict" description="In Ref. 1; CAA67754." evidence="9" ref="1">
    <original>C</original>
    <variation>G</variation>
    <location>
        <position position="729"/>
    </location>
</feature>
<feature type="sequence conflict" description="In Ref. 1; CAA67754." evidence="9" ref="1">
    <original>I</original>
    <variation>K</variation>
    <location>
        <position position="753"/>
    </location>
</feature>
<feature type="sequence conflict" description="In Ref. 1; CAA67754." evidence="9" ref="1">
    <original>L</original>
    <variation>Q</variation>
    <location>
        <position position="763"/>
    </location>
</feature>
<feature type="sequence conflict" description="In Ref. 1; CAA67754." evidence="9" ref="1">
    <original>FSA</original>
    <variation>YSD</variation>
    <location>
        <begin position="766"/>
        <end position="768"/>
    </location>
</feature>
<feature type="sequence conflict" description="In Ref. 1; CAA67754." evidence="9" ref="1">
    <original>D</original>
    <variation>E</variation>
    <location>
        <position position="816"/>
    </location>
</feature>
<feature type="sequence conflict" description="In Ref. 1; CAA67754." evidence="9" ref="1">
    <original>D</original>
    <variation>E</variation>
    <location>
        <position position="827"/>
    </location>
</feature>
<feature type="sequence conflict" description="In Ref. 1; CAA67754." evidence="9" ref="1">
    <original>PVMSMSD</original>
    <variation>AVLALSE</variation>
    <location>
        <begin position="841"/>
        <end position="847"/>
    </location>
</feature>
<feature type="sequence conflict" description="In Ref. 1; CAA67754." evidence="9" ref="1">
    <original>F</original>
    <variation>S</variation>
    <location>
        <position position="853"/>
    </location>
</feature>
<feature type="sequence conflict" description="In Ref. 1; CAA67754." evidence="9" ref="1">
    <original>A</original>
    <variation>T</variation>
    <location>
        <position position="893"/>
    </location>
</feature>
<feature type="sequence conflict" description="In Ref. 1; CAA67754." evidence="9" ref="1">
    <original>R</original>
    <variation>T</variation>
    <location>
        <position position="976"/>
    </location>
</feature>
<feature type="sequence conflict" description="In Ref. 2; BAC11842." evidence="9" ref="2">
    <original>L</original>
    <variation>H</variation>
    <location>
        <position position="992"/>
    </location>
</feature>
<feature type="sequence conflict" description="In Ref. 1; CAA67754." evidence="9" ref="1">
    <original>L</original>
    <variation>LR</variation>
    <location>
        <position position="1004"/>
    </location>
</feature>
<proteinExistence type="evidence at protein level"/>
<dbReference type="EMBL" id="X99375">
    <property type="protein sequence ID" value="CAA67754.1"/>
    <property type="molecule type" value="mRNA"/>
</dbReference>
<dbReference type="EMBL" id="AB091180">
    <property type="protein sequence ID" value="BAC11842.1"/>
    <property type="molecule type" value="mRNA"/>
</dbReference>
<dbReference type="RefSeq" id="NP_989563.2">
    <property type="nucleotide sequence ID" value="NM_204232.2"/>
</dbReference>
<dbReference type="SMR" id="P79987"/>
<dbReference type="BioGRID" id="675113">
    <property type="interactions" value="4"/>
</dbReference>
<dbReference type="FunCoup" id="P79987">
    <property type="interactions" value="2052"/>
</dbReference>
<dbReference type="IntAct" id="P79987">
    <property type="interactions" value="1"/>
</dbReference>
<dbReference type="STRING" id="9031.ENSGALP00000058465"/>
<dbReference type="GlyGen" id="P79987">
    <property type="glycosylation" value="2 sites"/>
</dbReference>
<dbReference type="PaxDb" id="9031-ENSGALP00000002393"/>
<dbReference type="GeneID" id="374074"/>
<dbReference type="KEGG" id="gga:374074"/>
<dbReference type="CTD" id="7290"/>
<dbReference type="VEuPathDB" id="HostDB:geneid_374074"/>
<dbReference type="eggNOG" id="KOG0973">
    <property type="taxonomic scope" value="Eukaryota"/>
</dbReference>
<dbReference type="InParanoid" id="P79987"/>
<dbReference type="OrthoDB" id="1741719at2759"/>
<dbReference type="PhylomeDB" id="P79987"/>
<dbReference type="PRO" id="PR:P79987"/>
<dbReference type="Proteomes" id="UP000000539">
    <property type="component" value="Unassembled WGS sequence"/>
</dbReference>
<dbReference type="GO" id="GO:0000785">
    <property type="term" value="C:chromatin"/>
    <property type="evidence" value="ECO:0000318"/>
    <property type="project" value="GO_Central"/>
</dbReference>
<dbReference type="GO" id="GO:0000417">
    <property type="term" value="C:HIR complex"/>
    <property type="evidence" value="ECO:0000318"/>
    <property type="project" value="GO_Central"/>
</dbReference>
<dbReference type="GO" id="GO:0005634">
    <property type="term" value="C:nucleus"/>
    <property type="evidence" value="ECO:0007669"/>
    <property type="project" value="UniProtKB-SubCell"/>
</dbReference>
<dbReference type="GO" id="GO:0006338">
    <property type="term" value="P:chromatin remodeling"/>
    <property type="evidence" value="ECO:0000318"/>
    <property type="project" value="GO_Central"/>
</dbReference>
<dbReference type="GO" id="GO:0006351">
    <property type="term" value="P:DNA-templated transcription"/>
    <property type="evidence" value="ECO:0007669"/>
    <property type="project" value="InterPro"/>
</dbReference>
<dbReference type="GO" id="GO:0006355">
    <property type="term" value="P:regulation of DNA-templated transcription"/>
    <property type="evidence" value="ECO:0007669"/>
    <property type="project" value="InterPro"/>
</dbReference>
<dbReference type="CDD" id="cd00200">
    <property type="entry name" value="WD40"/>
    <property type="match status" value="1"/>
</dbReference>
<dbReference type="FunFam" id="2.130.10.10:FF:000075">
    <property type="entry name" value="Protein HIRA"/>
    <property type="match status" value="1"/>
</dbReference>
<dbReference type="FunFam" id="2.130.10.10:FF:000105">
    <property type="entry name" value="Protein HIRA"/>
    <property type="match status" value="1"/>
</dbReference>
<dbReference type="Gene3D" id="2.130.10.10">
    <property type="entry name" value="YVTN repeat-like/Quinoprotein amine dehydrogenase"/>
    <property type="match status" value="2"/>
</dbReference>
<dbReference type="InterPro" id="IPR055410">
    <property type="entry name" value="CAF1B_HIR1_beta-prop"/>
</dbReference>
<dbReference type="InterPro" id="IPR031120">
    <property type="entry name" value="HIR1-like"/>
</dbReference>
<dbReference type="InterPro" id="IPR011494">
    <property type="entry name" value="HIRA-like_C"/>
</dbReference>
<dbReference type="InterPro" id="IPR015943">
    <property type="entry name" value="WD40/YVTN_repeat-like_dom_sf"/>
</dbReference>
<dbReference type="InterPro" id="IPR036322">
    <property type="entry name" value="WD40_repeat_dom_sf"/>
</dbReference>
<dbReference type="InterPro" id="IPR001680">
    <property type="entry name" value="WD40_rpt"/>
</dbReference>
<dbReference type="PANTHER" id="PTHR13831">
    <property type="entry name" value="MEMBER OF THE HIR1 FAMILY OF WD-REPEAT PROTEINS"/>
    <property type="match status" value="1"/>
</dbReference>
<dbReference type="PANTHER" id="PTHR13831:SF0">
    <property type="entry name" value="PROTEIN HIRA"/>
    <property type="match status" value="1"/>
</dbReference>
<dbReference type="Pfam" id="PF24105">
    <property type="entry name" value="Beta-prop_CAF1B_HIR1"/>
    <property type="match status" value="1"/>
</dbReference>
<dbReference type="Pfam" id="PF07569">
    <property type="entry name" value="Hira"/>
    <property type="match status" value="1"/>
</dbReference>
<dbReference type="SMART" id="SM00320">
    <property type="entry name" value="WD40"/>
    <property type="match status" value="7"/>
</dbReference>
<dbReference type="SUPFAM" id="SSF50978">
    <property type="entry name" value="WD40 repeat-like"/>
    <property type="match status" value="1"/>
</dbReference>
<dbReference type="PROSITE" id="PS00678">
    <property type="entry name" value="WD_REPEATS_1"/>
    <property type="match status" value="1"/>
</dbReference>
<dbReference type="PROSITE" id="PS50082">
    <property type="entry name" value="WD_REPEATS_2"/>
    <property type="match status" value="3"/>
</dbReference>
<dbReference type="PROSITE" id="PS50294">
    <property type="entry name" value="WD_REPEATS_REGION"/>
    <property type="match status" value="1"/>
</dbReference>
<gene>
    <name type="primary">HIRA</name>
    <name type="synonym">TUPLE1</name>
</gene>
<protein>
    <recommendedName>
        <fullName>Protein HIRA</fullName>
        <shortName>cHIRA</shortName>
    </recommendedName>
    <alternativeName>
        <fullName>TUP1-like enhancer of split protein 1</fullName>
    </alternativeName>
</protein>
<accession>P79987</accession>
<accession>Q8JIE6</accession>
<evidence type="ECO:0000250" key="1"/>
<evidence type="ECO:0000255" key="2">
    <source>
        <dbReference type="PROSITE-ProRule" id="PRU00221"/>
    </source>
</evidence>
<evidence type="ECO:0000256" key="3">
    <source>
        <dbReference type="SAM" id="MobiDB-lite"/>
    </source>
</evidence>
<evidence type="ECO:0000269" key="4">
    <source>
    </source>
</evidence>
<evidence type="ECO:0000269" key="5">
    <source>
    </source>
</evidence>
<evidence type="ECO:0000269" key="6">
    <source>
    </source>
</evidence>
<evidence type="ECO:0000269" key="7">
    <source>
    </source>
</evidence>
<evidence type="ECO:0000269" key="8">
    <source>
    </source>
</evidence>
<evidence type="ECO:0000305" key="9"/>
<reference key="1">
    <citation type="journal article" date="1997" name="Hum. Mol. Genet.">
        <title>Cloning and developmental expression analysis of chick Hira (Chira), a candidate gene for DiGeorge syndrome.</title>
        <authorList>
            <person name="Roberts C."/>
            <person name="Daw S.C."/>
            <person name="Halford S."/>
            <person name="Scambler P.J."/>
        </authorList>
    </citation>
    <scope>NUCLEOTIDE SEQUENCE [MRNA]</scope>
    <scope>DEVELOPMENTAL STAGE</scope>
</reference>
<reference key="2">
    <citation type="journal article" date="2004" name="Gene">
        <title>WD dipeptide motifs and LXXLL motif of chicken HIRA are essential for interactions with the p48 subunit of chromatin assembly factor-1 and histone deacetylase-2 in vitro and in vivo.</title>
        <authorList>
            <person name="Ahmad A."/>
            <person name="Takami Y."/>
            <person name="Nakayama T."/>
        </authorList>
    </citation>
    <scope>NUCLEOTIDE SEQUENCE [MRNA]</scope>
    <scope>WD REPEATS</scope>
    <scope>INTERACTION WITH HDAC1; HDAC2 AND RBBP4</scope>
    <scope>MUTAGENESIS OF 43-TRP-ASN-44; 121-TRP-ARG-122; 182-TRP-ASP-183; 336-TRP-THR-337; LEU-993; LEU-996 AND LEU-997</scope>
    <source>
        <tissue>B-cell</tissue>
    </source>
</reference>
<reference key="3">
    <citation type="journal article" date="2003" name="Biochem. Biophys. Res. Commun.">
        <title>WD dipeptide motifs and LXXLL motif of chicken HIRA are necessary for transcription repression and the latter motif is essential for interaction with histone deacetylase-2 in vivo.</title>
        <authorList>
            <person name="Ahmad A."/>
            <person name="Takami Y."/>
            <person name="Nakayama T."/>
        </authorList>
    </citation>
    <scope>INTERACTION WITH ASF1; HDAC1; HDAC2 AND RBBP4</scope>
    <scope>MUTAGENESIS OF LEU-993; LEU-996 AND LEU-997</scope>
</reference>
<reference key="4">
    <citation type="journal article" date="2005" name="J. Biol. Chem.">
        <title>Different roles of N-terminal and C-terminal halves of HIRA in transcription regulation of cell cycle-related genes that contribute to control of vertebrate cell growth.</title>
        <authorList>
            <person name="Ahmad A."/>
            <person name="Kikuchi H."/>
            <person name="Takami Y."/>
            <person name="Nakayama T."/>
        </authorList>
    </citation>
    <scope>FUNCTION</scope>
</reference>
<reference key="5">
    <citation type="journal article" date="2006" name="J. Biol. Chem.">
        <title>Asf1 is required for viability and chromatin assembly during DNA replication in vertebrate cells.</title>
        <authorList>
            <person name="Sanematsu F."/>
            <person name="Takami Y."/>
            <person name="Barman H.K."/>
            <person name="Fukagawa T."/>
            <person name="Ono T."/>
            <person name="Shibahara K."/>
            <person name="Nakayama T."/>
        </authorList>
    </citation>
    <scope>INTERACTION WITH ASF1</scope>
</reference>